<organism>
    <name type="scientific">Mycoplasmopsis agalactiae (strain NCTC 10123 / CIP 59.7 / PG2)</name>
    <name type="common">Mycoplasma agalactiae</name>
    <dbReference type="NCBI Taxonomy" id="347257"/>
    <lineage>
        <taxon>Bacteria</taxon>
        <taxon>Bacillati</taxon>
        <taxon>Mycoplasmatota</taxon>
        <taxon>Mycoplasmoidales</taxon>
        <taxon>Metamycoplasmataceae</taxon>
        <taxon>Mycoplasmopsis</taxon>
    </lineage>
</organism>
<sequence>MAHTKAGGSTRNGRDSRGQRLGIKLGDGQFCTAGSIIFRQRGTKIFPGVNAGRGNDDTIYALITGYVKFERRRNRVYASVYPTRVQNSTSAE</sequence>
<accession>A5IYZ5</accession>
<proteinExistence type="inferred from homology"/>
<keyword id="KW-1185">Reference proteome</keyword>
<keyword id="KW-0687">Ribonucleoprotein</keyword>
<keyword id="KW-0689">Ribosomal protein</keyword>
<comment type="similarity">
    <text evidence="1">Belongs to the bacterial ribosomal protein bL27 family.</text>
</comment>
<protein>
    <recommendedName>
        <fullName evidence="1">Large ribosomal subunit protein bL27</fullName>
    </recommendedName>
    <alternativeName>
        <fullName evidence="3">50S ribosomal protein L27</fullName>
    </alternativeName>
</protein>
<reference key="1">
    <citation type="journal article" date="2007" name="PLoS Genet.">
        <title>Being pathogenic, plastic, and sexual while living with a nearly minimal bacterial genome.</title>
        <authorList>
            <person name="Sirand-Pugnet P."/>
            <person name="Lartigue C."/>
            <person name="Marenda M."/>
            <person name="Jacob D."/>
            <person name="Barre A."/>
            <person name="Barbe V."/>
            <person name="Schenowitz C."/>
            <person name="Mangenot S."/>
            <person name="Couloux A."/>
            <person name="Segurens B."/>
            <person name="de Daruvar A."/>
            <person name="Blanchard A."/>
            <person name="Citti C."/>
        </authorList>
    </citation>
    <scope>NUCLEOTIDE SEQUENCE [LARGE SCALE GENOMIC DNA]</scope>
    <source>
        <strain>NCTC 10123 / CIP 59.7 / PG2</strain>
    </source>
</reference>
<evidence type="ECO:0000255" key="1">
    <source>
        <dbReference type="HAMAP-Rule" id="MF_00539"/>
    </source>
</evidence>
<evidence type="ECO:0000256" key="2">
    <source>
        <dbReference type="SAM" id="MobiDB-lite"/>
    </source>
</evidence>
<evidence type="ECO:0000305" key="3"/>
<feature type="chain" id="PRO_1000128776" description="Large ribosomal subunit protein bL27">
    <location>
        <begin position="1"/>
        <end position="92"/>
    </location>
</feature>
<feature type="region of interest" description="Disordered" evidence="2">
    <location>
        <begin position="1"/>
        <end position="22"/>
    </location>
</feature>
<gene>
    <name evidence="1" type="primary">rpmA</name>
    <name type="ordered locus">MAG5540</name>
</gene>
<name>RL27_MYCAP</name>
<dbReference type="EMBL" id="CU179680">
    <property type="protein sequence ID" value="CAL59254.1"/>
    <property type="molecule type" value="Genomic_DNA"/>
</dbReference>
<dbReference type="RefSeq" id="WP_004023968.1">
    <property type="nucleotide sequence ID" value="NC_009497.1"/>
</dbReference>
<dbReference type="SMR" id="A5IYZ5"/>
<dbReference type="STRING" id="347257.MAG5540"/>
<dbReference type="GeneID" id="93358297"/>
<dbReference type="KEGG" id="maa:MAG5540"/>
<dbReference type="HOGENOM" id="CLU_095424_4_1_14"/>
<dbReference type="Proteomes" id="UP000007065">
    <property type="component" value="Chromosome"/>
</dbReference>
<dbReference type="GO" id="GO:0022625">
    <property type="term" value="C:cytosolic large ribosomal subunit"/>
    <property type="evidence" value="ECO:0007669"/>
    <property type="project" value="TreeGrafter"/>
</dbReference>
<dbReference type="GO" id="GO:0003735">
    <property type="term" value="F:structural constituent of ribosome"/>
    <property type="evidence" value="ECO:0007669"/>
    <property type="project" value="InterPro"/>
</dbReference>
<dbReference type="GO" id="GO:0006412">
    <property type="term" value="P:translation"/>
    <property type="evidence" value="ECO:0007669"/>
    <property type="project" value="UniProtKB-UniRule"/>
</dbReference>
<dbReference type="FunFam" id="2.40.50.100:FF:000004">
    <property type="entry name" value="50S ribosomal protein L27"/>
    <property type="match status" value="1"/>
</dbReference>
<dbReference type="Gene3D" id="2.40.50.100">
    <property type="match status" value="1"/>
</dbReference>
<dbReference type="HAMAP" id="MF_00539">
    <property type="entry name" value="Ribosomal_bL27"/>
    <property type="match status" value="1"/>
</dbReference>
<dbReference type="InterPro" id="IPR001684">
    <property type="entry name" value="Ribosomal_bL27"/>
</dbReference>
<dbReference type="InterPro" id="IPR018261">
    <property type="entry name" value="Ribosomal_bL27_CS"/>
</dbReference>
<dbReference type="NCBIfam" id="TIGR00062">
    <property type="entry name" value="L27"/>
    <property type="match status" value="1"/>
</dbReference>
<dbReference type="PANTHER" id="PTHR15893:SF0">
    <property type="entry name" value="LARGE RIBOSOMAL SUBUNIT PROTEIN BL27M"/>
    <property type="match status" value="1"/>
</dbReference>
<dbReference type="PANTHER" id="PTHR15893">
    <property type="entry name" value="RIBOSOMAL PROTEIN L27"/>
    <property type="match status" value="1"/>
</dbReference>
<dbReference type="Pfam" id="PF01016">
    <property type="entry name" value="Ribosomal_L27"/>
    <property type="match status" value="1"/>
</dbReference>
<dbReference type="PRINTS" id="PR00063">
    <property type="entry name" value="RIBOSOMALL27"/>
</dbReference>
<dbReference type="SUPFAM" id="SSF110324">
    <property type="entry name" value="Ribosomal L27 protein-like"/>
    <property type="match status" value="1"/>
</dbReference>
<dbReference type="PROSITE" id="PS00831">
    <property type="entry name" value="RIBOSOMAL_L27"/>
    <property type="match status" value="1"/>
</dbReference>